<comment type="function">
    <text evidence="1">Catalyzes the isomerization between 2-isopropylmalate and 3-isopropylmalate, via the formation of 2-isopropylmaleate.</text>
</comment>
<comment type="catalytic activity">
    <reaction evidence="1">
        <text>(2R,3S)-3-isopropylmalate = (2S)-2-isopropylmalate</text>
        <dbReference type="Rhea" id="RHEA:32287"/>
        <dbReference type="ChEBI" id="CHEBI:1178"/>
        <dbReference type="ChEBI" id="CHEBI:35121"/>
        <dbReference type="EC" id="4.2.1.33"/>
    </reaction>
</comment>
<comment type="cofactor">
    <cofactor evidence="1">
        <name>[4Fe-4S] cluster</name>
        <dbReference type="ChEBI" id="CHEBI:49883"/>
    </cofactor>
    <text evidence="1">Binds 1 [4Fe-4S] cluster per subunit.</text>
</comment>
<comment type="pathway">
    <text evidence="1">Amino-acid biosynthesis; L-leucine biosynthesis; L-leucine from 3-methyl-2-oxobutanoate: step 2/4.</text>
</comment>
<comment type="subunit">
    <text evidence="1">Heterodimer of LeuC and LeuD.</text>
</comment>
<comment type="similarity">
    <text evidence="1">Belongs to the aconitase/IPM isomerase family. LeuC type 1 subfamily.</text>
</comment>
<feature type="chain" id="PRO_0000076838" description="3-isopropylmalate dehydratase large subunit">
    <location>
        <begin position="1"/>
        <end position="471"/>
    </location>
</feature>
<feature type="binding site" evidence="1">
    <location>
        <position position="347"/>
    </location>
    <ligand>
        <name>[4Fe-4S] cluster</name>
        <dbReference type="ChEBI" id="CHEBI:49883"/>
    </ligand>
</feature>
<feature type="binding site" evidence="1">
    <location>
        <position position="407"/>
    </location>
    <ligand>
        <name>[4Fe-4S] cluster</name>
        <dbReference type="ChEBI" id="CHEBI:49883"/>
    </ligand>
</feature>
<feature type="binding site" evidence="1">
    <location>
        <position position="410"/>
    </location>
    <ligand>
        <name>[4Fe-4S] cluster</name>
        <dbReference type="ChEBI" id="CHEBI:49883"/>
    </ligand>
</feature>
<gene>
    <name evidence="1" type="primary">leuC</name>
    <name type="ordered locus">VP0343</name>
</gene>
<name>LEUC_VIBPA</name>
<keyword id="KW-0004">4Fe-4S</keyword>
<keyword id="KW-0028">Amino-acid biosynthesis</keyword>
<keyword id="KW-0100">Branched-chain amino acid biosynthesis</keyword>
<keyword id="KW-0408">Iron</keyword>
<keyword id="KW-0411">Iron-sulfur</keyword>
<keyword id="KW-0432">Leucine biosynthesis</keyword>
<keyword id="KW-0456">Lyase</keyword>
<keyword id="KW-0479">Metal-binding</keyword>
<protein>
    <recommendedName>
        <fullName evidence="1">3-isopropylmalate dehydratase large subunit</fullName>
        <ecNumber evidence="1">4.2.1.33</ecNumber>
    </recommendedName>
    <alternativeName>
        <fullName evidence="1">Alpha-IPM isomerase</fullName>
        <shortName evidence="1">IPMI</shortName>
    </alternativeName>
    <alternativeName>
        <fullName evidence="1">Isopropylmalate isomerase</fullName>
    </alternativeName>
</protein>
<evidence type="ECO:0000255" key="1">
    <source>
        <dbReference type="HAMAP-Rule" id="MF_01026"/>
    </source>
</evidence>
<dbReference type="EC" id="4.2.1.33" evidence="1"/>
<dbReference type="EMBL" id="BA000031">
    <property type="protein sequence ID" value="BAC58606.1"/>
    <property type="molecule type" value="Genomic_DNA"/>
</dbReference>
<dbReference type="RefSeq" id="NP_796722.1">
    <property type="nucleotide sequence ID" value="NC_004603.1"/>
</dbReference>
<dbReference type="RefSeq" id="WP_005480559.1">
    <property type="nucleotide sequence ID" value="NC_004603.1"/>
</dbReference>
<dbReference type="SMR" id="Q87SS9"/>
<dbReference type="DNASU" id="1187810"/>
<dbReference type="GeneID" id="1187810"/>
<dbReference type="KEGG" id="vpa:VP0343"/>
<dbReference type="PATRIC" id="fig|223926.6.peg.330"/>
<dbReference type="eggNOG" id="COG0065">
    <property type="taxonomic scope" value="Bacteria"/>
</dbReference>
<dbReference type="HOGENOM" id="CLU_006714_3_4_6"/>
<dbReference type="UniPathway" id="UPA00048">
    <property type="reaction ID" value="UER00071"/>
</dbReference>
<dbReference type="Proteomes" id="UP000002493">
    <property type="component" value="Chromosome 1"/>
</dbReference>
<dbReference type="GO" id="GO:0003861">
    <property type="term" value="F:3-isopropylmalate dehydratase activity"/>
    <property type="evidence" value="ECO:0007669"/>
    <property type="project" value="UniProtKB-UniRule"/>
</dbReference>
<dbReference type="GO" id="GO:0051539">
    <property type="term" value="F:4 iron, 4 sulfur cluster binding"/>
    <property type="evidence" value="ECO:0007669"/>
    <property type="project" value="UniProtKB-KW"/>
</dbReference>
<dbReference type="GO" id="GO:0046872">
    <property type="term" value="F:metal ion binding"/>
    <property type="evidence" value="ECO:0007669"/>
    <property type="project" value="UniProtKB-KW"/>
</dbReference>
<dbReference type="GO" id="GO:0009098">
    <property type="term" value="P:L-leucine biosynthetic process"/>
    <property type="evidence" value="ECO:0007669"/>
    <property type="project" value="UniProtKB-UniRule"/>
</dbReference>
<dbReference type="CDD" id="cd01583">
    <property type="entry name" value="IPMI"/>
    <property type="match status" value="1"/>
</dbReference>
<dbReference type="FunFam" id="3.30.499.10:FF:000006">
    <property type="entry name" value="3-isopropylmalate dehydratase large subunit"/>
    <property type="match status" value="1"/>
</dbReference>
<dbReference type="FunFam" id="3.30.499.10:FF:000007">
    <property type="entry name" value="3-isopropylmalate dehydratase large subunit"/>
    <property type="match status" value="1"/>
</dbReference>
<dbReference type="Gene3D" id="3.30.499.10">
    <property type="entry name" value="Aconitase, domain 3"/>
    <property type="match status" value="2"/>
</dbReference>
<dbReference type="HAMAP" id="MF_01026">
    <property type="entry name" value="LeuC_type1"/>
    <property type="match status" value="1"/>
</dbReference>
<dbReference type="InterPro" id="IPR004430">
    <property type="entry name" value="3-IsopropMal_deHydase_lsu"/>
</dbReference>
<dbReference type="InterPro" id="IPR015931">
    <property type="entry name" value="Acnase/IPM_dHydase_lsu_aba_1/3"/>
</dbReference>
<dbReference type="InterPro" id="IPR001030">
    <property type="entry name" value="Acoase/IPM_deHydtase_lsu_aba"/>
</dbReference>
<dbReference type="InterPro" id="IPR018136">
    <property type="entry name" value="Aconitase_4Fe-4S_BS"/>
</dbReference>
<dbReference type="InterPro" id="IPR036008">
    <property type="entry name" value="Aconitase_4Fe-4S_dom"/>
</dbReference>
<dbReference type="InterPro" id="IPR050067">
    <property type="entry name" value="IPM_dehydratase_rel_enz"/>
</dbReference>
<dbReference type="InterPro" id="IPR033941">
    <property type="entry name" value="IPMI_cat"/>
</dbReference>
<dbReference type="NCBIfam" id="TIGR00170">
    <property type="entry name" value="leuC"/>
    <property type="match status" value="1"/>
</dbReference>
<dbReference type="NCBIfam" id="NF004016">
    <property type="entry name" value="PRK05478.1"/>
    <property type="match status" value="1"/>
</dbReference>
<dbReference type="NCBIfam" id="NF009116">
    <property type="entry name" value="PRK12466.1"/>
    <property type="match status" value="1"/>
</dbReference>
<dbReference type="PANTHER" id="PTHR43822:SF9">
    <property type="entry name" value="3-ISOPROPYLMALATE DEHYDRATASE"/>
    <property type="match status" value="1"/>
</dbReference>
<dbReference type="PANTHER" id="PTHR43822">
    <property type="entry name" value="HOMOACONITASE, MITOCHONDRIAL-RELATED"/>
    <property type="match status" value="1"/>
</dbReference>
<dbReference type="Pfam" id="PF00330">
    <property type="entry name" value="Aconitase"/>
    <property type="match status" value="1"/>
</dbReference>
<dbReference type="PRINTS" id="PR00415">
    <property type="entry name" value="ACONITASE"/>
</dbReference>
<dbReference type="SUPFAM" id="SSF53732">
    <property type="entry name" value="Aconitase iron-sulfur domain"/>
    <property type="match status" value="1"/>
</dbReference>
<dbReference type="PROSITE" id="PS00450">
    <property type="entry name" value="ACONITASE_1"/>
    <property type="match status" value="1"/>
</dbReference>
<dbReference type="PROSITE" id="PS01244">
    <property type="entry name" value="ACONITASE_2"/>
    <property type="match status" value="1"/>
</dbReference>
<organism>
    <name type="scientific">Vibrio parahaemolyticus serotype O3:K6 (strain RIMD 2210633)</name>
    <dbReference type="NCBI Taxonomy" id="223926"/>
    <lineage>
        <taxon>Bacteria</taxon>
        <taxon>Pseudomonadati</taxon>
        <taxon>Pseudomonadota</taxon>
        <taxon>Gammaproteobacteria</taxon>
        <taxon>Vibrionales</taxon>
        <taxon>Vibrionaceae</taxon>
        <taxon>Vibrio</taxon>
    </lineage>
</organism>
<reference key="1">
    <citation type="journal article" date="2003" name="Lancet">
        <title>Genome sequence of Vibrio parahaemolyticus: a pathogenic mechanism distinct from that of V. cholerae.</title>
        <authorList>
            <person name="Makino K."/>
            <person name="Oshima K."/>
            <person name="Kurokawa K."/>
            <person name="Yokoyama K."/>
            <person name="Uda T."/>
            <person name="Tagomori K."/>
            <person name="Iijima Y."/>
            <person name="Najima M."/>
            <person name="Nakano M."/>
            <person name="Yamashita A."/>
            <person name="Kubota Y."/>
            <person name="Kimura S."/>
            <person name="Yasunaga T."/>
            <person name="Honda T."/>
            <person name="Shinagawa H."/>
            <person name="Hattori M."/>
            <person name="Iida T."/>
        </authorList>
    </citation>
    <scope>NUCLEOTIDE SEQUENCE [LARGE SCALE GENOMIC DNA]</scope>
    <source>
        <strain>RIMD 2210633</strain>
    </source>
</reference>
<accession>Q87SS9</accession>
<proteinExistence type="inferred from homology"/>
<sequence length="471" mass="50618">MGKTLYEKVYDAHVAVAAEGETPILYIDRHLVHEVTSPQAFDGLREKGRKVRQVSKTFATMDHNVSTTTKDINASGEMARIQMETLSKNCEEFGVTLYDLNHKYQGIVHVMGPELGITLPGMTIVCGDSHTATHGAFGSLAFGIGTSEVEHVLATQTLKQARAKTMKIEVKGKVAPGITAKDIVLAIIGKTTAAGGTGYVVEFCGEAITDLSMEGRMTVCNMAIELGAKAGLIAPDETTFEYIKGRKFSPQGADFDAAVEYWKTLKTDADAEFDAVVTLNAADIKPQVTWGTNPGQVIAVDQPIPAPESFTDPIEKASAEKALAYMGLEAGKSLSDYQVNKVFVGSCTNSRIEDMRAAAVVAKGRKVASHVQALIVPGSEQVKAQAEAEGLDVIFKEAGFEWRLPGCSMCLAMNNDRLGPHERCASTSNRNFEGRQGRDGRTHLVSPAMAAAAAIAGHFVDIRELTFDKQD</sequence>